<proteinExistence type="evidence at protein level"/>
<dbReference type="EC" id="3.2.2.-" evidence="1 3"/>
<dbReference type="EC" id="3.2.2.6" evidence="3"/>
<dbReference type="EMBL" id="FOTL01000044">
    <property type="protein sequence ID" value="SFL81530.1"/>
    <property type="molecule type" value="Genomic_DNA"/>
</dbReference>
<dbReference type="RefSeq" id="WP_074798936.1">
    <property type="nucleotide sequence ID" value="NZ_FOTL01000044.1"/>
</dbReference>
<dbReference type="SMR" id="A0A1I4KS07"/>
<dbReference type="OrthoDB" id="269523at2157"/>
<dbReference type="Proteomes" id="UP000183442">
    <property type="component" value="Unassembled WGS sequence"/>
</dbReference>
<dbReference type="GO" id="GO:0003953">
    <property type="term" value="F:NAD+ nucleosidase activity"/>
    <property type="evidence" value="ECO:0000314"/>
    <property type="project" value="UniProtKB"/>
</dbReference>
<dbReference type="GO" id="GO:0061809">
    <property type="term" value="F:NAD+ nucleosidase activity, cyclic ADP-ribose generating"/>
    <property type="evidence" value="ECO:0007669"/>
    <property type="project" value="UniProtKB-EC"/>
</dbReference>
<dbReference type="GO" id="GO:0019677">
    <property type="term" value="P:NAD catabolic process"/>
    <property type="evidence" value="ECO:0000314"/>
    <property type="project" value="UniProtKB"/>
</dbReference>
<dbReference type="GO" id="GO:0007165">
    <property type="term" value="P:signal transduction"/>
    <property type="evidence" value="ECO:0007669"/>
    <property type="project" value="InterPro"/>
</dbReference>
<dbReference type="Gene3D" id="3.40.50.10140">
    <property type="entry name" value="Toll/interleukin-1 receptor homology (TIR) domain"/>
    <property type="match status" value="1"/>
</dbReference>
<dbReference type="InterPro" id="IPR000157">
    <property type="entry name" value="TIR_dom"/>
</dbReference>
<dbReference type="InterPro" id="IPR035897">
    <property type="entry name" value="Toll_tir_struct_dom_sf"/>
</dbReference>
<dbReference type="PANTHER" id="PTHR32009:SF39">
    <property type="entry name" value="TIR DOMAIN-CONTAINING PROTEIN"/>
    <property type="match status" value="1"/>
</dbReference>
<dbReference type="PANTHER" id="PTHR32009">
    <property type="entry name" value="TMV RESISTANCE PROTEIN N-LIKE"/>
    <property type="match status" value="1"/>
</dbReference>
<dbReference type="Pfam" id="PF13676">
    <property type="entry name" value="TIR_2"/>
    <property type="match status" value="1"/>
</dbReference>
<dbReference type="SMART" id="SM00255">
    <property type="entry name" value="TIR"/>
    <property type="match status" value="1"/>
</dbReference>
<dbReference type="SUPFAM" id="SSF52200">
    <property type="entry name" value="Toll/Interleukin receptor TIR domain"/>
    <property type="match status" value="1"/>
</dbReference>
<dbReference type="PROSITE" id="PS50104">
    <property type="entry name" value="TIR"/>
    <property type="match status" value="1"/>
</dbReference>
<evidence type="ECO:0000250" key="1">
    <source>
        <dbReference type="UniProtKB" id="A0A009IHW8"/>
    </source>
</evidence>
<evidence type="ECO:0000255" key="2">
    <source>
        <dbReference type="PROSITE-ProRule" id="PRU00204"/>
    </source>
</evidence>
<evidence type="ECO:0000269" key="3">
    <source>
    </source>
</evidence>
<evidence type="ECO:0000303" key="4">
    <source>
    </source>
</evidence>
<evidence type="ECO:0000305" key="5"/>
<evidence type="ECO:0000312" key="6">
    <source>
        <dbReference type="EMBL" id="SFL81530.1"/>
    </source>
</evidence>
<sequence>MEDLEIFLKRFEDLLIDLATYNENESNDYIIYRKKLLSYDYLKDFIPDFIIKNRKPQFFRAYMQEIGGYKERRDLIYKGFERLYDYETIKNFDSDNSYNVNQIENFLERFEDLLIDLATENLKKDGFEEYSLFRKKFLTCNYFKDMPIFLKRNPKHFRYYMQSQGGYKERRKIISEEFNKLFSIIEGSNFNSDSNNKNKSINKKEYDIFVSHSSEDKEDFVKEFVNLLKQKGLSVWYDDDIVKIGHNLRKRISKGIKSSNYAVVIFSEDFFKSKWTNYEYDNIFLDFYDEEKVLPILHDLTIEDLEKFDGSIPLIRALSTKKFTVEEIIHEILERINEEKS</sequence>
<comment type="function">
    <text evidence="1 3">NAD(+) hydrolase (NADase) that catalyzes cleavage of NAD(+) into ADP-D-ribose (ADPR) and nicotinamide (PubMed:29395922). In addition to ADPR, also generates a cyclization variant of cyclic ADPR (cADPR), termed v-cADPR (probably 2'cADPR) (PubMed:29395922).</text>
</comment>
<comment type="catalytic activity">
    <reaction evidence="3">
        <text>NAD(+) + H2O = ADP-D-ribose + nicotinamide + H(+)</text>
        <dbReference type="Rhea" id="RHEA:16301"/>
        <dbReference type="ChEBI" id="CHEBI:15377"/>
        <dbReference type="ChEBI" id="CHEBI:15378"/>
        <dbReference type="ChEBI" id="CHEBI:17154"/>
        <dbReference type="ChEBI" id="CHEBI:57540"/>
        <dbReference type="ChEBI" id="CHEBI:57967"/>
        <dbReference type="EC" id="3.2.2.6"/>
    </reaction>
    <physiologicalReaction direction="left-to-right" evidence="3">
        <dbReference type="Rhea" id="RHEA:16302"/>
    </physiologicalReaction>
</comment>
<comment type="catalytic activity">
    <reaction evidence="1">
        <text>NAD(+) = 2'cADPR + nicotinamide + H(+)</text>
        <dbReference type="Rhea" id="RHEA:75299"/>
        <dbReference type="ChEBI" id="CHEBI:15378"/>
        <dbReference type="ChEBI" id="CHEBI:17154"/>
        <dbReference type="ChEBI" id="CHEBI:57540"/>
        <dbReference type="ChEBI" id="CHEBI:194248"/>
    </reaction>
    <physiologicalReaction direction="left-to-right" evidence="1">
        <dbReference type="Rhea" id="RHEA:75300"/>
    </physiologicalReaction>
</comment>
<comment type="domain">
    <text evidence="2">The TIR domain mediates NAD(+) hydrolase (NADase) activity. Self-association of TIR domains is required for NADase activity.</text>
</comment>
<gene>
    <name evidence="4" type="primary">tcpO</name>
    <name evidence="6" type="ORF">SAMN02910297_01820</name>
</gene>
<name>TCPO_METOL</name>
<feature type="chain" id="PRO_0000449145" description="Probable 2' cyclic ADP-D-ribose synthase TcpO">
    <location>
        <begin position="1"/>
        <end position="341"/>
    </location>
</feature>
<feature type="domain" description="TIR" evidence="2">
    <location>
        <begin position="204"/>
        <end position="336"/>
    </location>
</feature>
<feature type="active site" evidence="2">
    <location>
        <position position="279"/>
    </location>
</feature>
<feature type="binding site" evidence="2">
    <location>
        <begin position="213"/>
        <end position="214"/>
    </location>
    <ligand>
        <name>NAD(+)</name>
        <dbReference type="ChEBI" id="CHEBI:57540"/>
    </ligand>
</feature>
<feature type="binding site" evidence="2">
    <location>
        <position position="243"/>
    </location>
    <ligand>
        <name>NAD(+)</name>
        <dbReference type="ChEBI" id="CHEBI:57540"/>
    </ligand>
</feature>
<organism>
    <name type="scientific">Methanobrevibacter olleyae</name>
    <dbReference type="NCBI Taxonomy" id="294671"/>
    <lineage>
        <taxon>Archaea</taxon>
        <taxon>Methanobacteriati</taxon>
        <taxon>Methanobacteriota</taxon>
        <taxon>Methanomada group</taxon>
        <taxon>Methanobacteria</taxon>
        <taxon>Methanobacteriales</taxon>
        <taxon>Methanobacteriaceae</taxon>
        <taxon>Methanobrevibacter</taxon>
    </lineage>
</organism>
<keyword id="KW-0378">Hydrolase</keyword>
<keyword id="KW-0520">NAD</keyword>
<protein>
    <recommendedName>
        <fullName evidence="5">Probable 2' cyclic ADP-D-ribose synthase TcpO</fullName>
        <shortName evidence="5">2'cADPR synthase TcpO</shortName>
        <ecNumber evidence="1 3">3.2.2.-</ecNumber>
    </recommendedName>
    <alternativeName>
        <fullName evidence="5">NAD(+) hydrolase TcpO</fullName>
        <ecNumber evidence="3">3.2.2.6</ecNumber>
    </alternativeName>
    <alternativeName>
        <fullName evidence="4">TIR domain-containing protein in M.olleyae</fullName>
        <shortName evidence="4">tcpO</shortName>
    </alternativeName>
</protein>
<reference key="1">
    <citation type="submission" date="2016-10" db="EMBL/GenBank/DDBJ databases">
        <authorList>
            <person name="Varghese N."/>
        </authorList>
    </citation>
    <scope>NUCLEOTIDE SEQUENCE [LARGE SCALE GENOMIC DNA]</scope>
    <source>
        <strain>DSM 16632</strain>
    </source>
</reference>
<reference key="2">
    <citation type="journal article" date="2018" name="Curr. Biol.">
        <title>TIR domain proteins are an ancient family of NAD+-consuming enzymes.</title>
        <authorList>
            <person name="Essuman K."/>
            <person name="Summers D.W."/>
            <person name="Sasaki Y."/>
            <person name="Mao X."/>
            <person name="Yim A.K.Y."/>
            <person name="DiAntonio A."/>
            <person name="Milbrandt J."/>
        </authorList>
    </citation>
    <scope>FUNCTION</scope>
    <scope>CATALYTIC ACTIVITY</scope>
</reference>
<accession>A0A1I4KS07</accession>